<accession>Q8VC33</accession>
<accession>Q91W38</accession>
<comment type="function">
    <text evidence="2 4">Plays an important role in retinal cone photoreceptor survival (PubMed:25957687). In association with glucose transporter SLC16A1/GLUT1 and BSG, promotes retinal cone survival by enhancing aerobic glycolysis and accelerating the entry of glucose into photoreceptors (PubMed:25957687). May play a role in cone cell viability, slowing down cone degeneration, does not seem to play a role in degenerating rods (PubMed:15220920).</text>
</comment>
<comment type="subunit">
    <text evidence="4">Interacts with isoform 1 of BSG.</text>
</comment>
<comment type="subcellular location">
    <subcellularLocation>
        <location evidence="2">Cell projection</location>
        <location evidence="2">Cilium</location>
        <location evidence="2">Photoreceptor outer segment</location>
    </subcellularLocation>
</comment>
<comment type="tissue specificity">
    <text evidence="2 3">Expressed in the retina (at protein level) (PubMed:15220920, PubMed:19843539). Expressed predominantly by photoreceptors in both the inner and outer nuclear layer (at protein level) (PubMed:15220920, PubMed:19843539). Not expressed in the testis, spleen, intestine, lung, cerebellum, or kidney (PubMed:15220920).</text>
</comment>
<comment type="similarity">
    <text evidence="5">Belongs to the nucleoredoxin family.</text>
</comment>
<protein>
    <recommendedName>
        <fullName>Nucleoredoxin-like protein 1</fullName>
    </recommendedName>
    <alternativeName>
        <fullName>Rod-derived cone viability factor</fullName>
        <shortName>RdCVF</shortName>
    </alternativeName>
    <alternativeName>
        <fullName>Thioredoxin-like protein 6</fullName>
    </alternativeName>
</protein>
<evidence type="ECO:0000256" key="1">
    <source>
        <dbReference type="SAM" id="MobiDB-lite"/>
    </source>
</evidence>
<evidence type="ECO:0000269" key="2">
    <source>
    </source>
</evidence>
<evidence type="ECO:0000269" key="3">
    <source>
    </source>
</evidence>
<evidence type="ECO:0000269" key="4">
    <source>
    </source>
</evidence>
<evidence type="ECO:0000305" key="5"/>
<dbReference type="EMBL" id="BC021911">
    <property type="protein sequence ID" value="AAH21911.1"/>
    <property type="molecule type" value="mRNA"/>
</dbReference>
<dbReference type="CCDS" id="CCDS40385.1"/>
<dbReference type="RefSeq" id="NP_663573.1">
    <property type="nucleotide sequence ID" value="NM_145598.3"/>
</dbReference>
<dbReference type="SMR" id="Q8VC33"/>
<dbReference type="FunCoup" id="Q8VC33">
    <property type="interactions" value="194"/>
</dbReference>
<dbReference type="STRING" id="10090.ENSMUSP00000127094"/>
<dbReference type="PhosphoSitePlus" id="Q8VC33"/>
<dbReference type="PaxDb" id="10090-ENSMUSP00000127094"/>
<dbReference type="ProteomicsDB" id="293791"/>
<dbReference type="Antibodypedia" id="27693">
    <property type="antibodies" value="137 antibodies from 22 providers"/>
</dbReference>
<dbReference type="DNASU" id="234404"/>
<dbReference type="Ensembl" id="ENSMUST00000163659.3">
    <property type="protein sequence ID" value="ENSMUSP00000127094.2"/>
    <property type="gene ID" value="ENSMUSG00000034829.10"/>
</dbReference>
<dbReference type="GeneID" id="234404"/>
<dbReference type="KEGG" id="mmu:234404"/>
<dbReference type="UCSC" id="uc012gfu.1">
    <property type="organism name" value="mouse"/>
</dbReference>
<dbReference type="AGR" id="MGI:1924446"/>
<dbReference type="CTD" id="115861"/>
<dbReference type="MGI" id="MGI:1924446">
    <property type="gene designation" value="Nxnl1"/>
</dbReference>
<dbReference type="VEuPathDB" id="HostDB:ENSMUSG00000034829"/>
<dbReference type="eggNOG" id="KOG2501">
    <property type="taxonomic scope" value="Eukaryota"/>
</dbReference>
<dbReference type="GeneTree" id="ENSGT00940000161246"/>
<dbReference type="HOGENOM" id="CLU_116457_0_0_1"/>
<dbReference type="InParanoid" id="Q8VC33"/>
<dbReference type="OMA" id="KTMPKRW"/>
<dbReference type="OrthoDB" id="189920at2759"/>
<dbReference type="PhylomeDB" id="Q8VC33"/>
<dbReference type="TreeFam" id="TF331873"/>
<dbReference type="BioGRID-ORCS" id="234404">
    <property type="hits" value="1 hit in 76 CRISPR screens"/>
</dbReference>
<dbReference type="PRO" id="PR:Q8VC33"/>
<dbReference type="Proteomes" id="UP000000589">
    <property type="component" value="Chromosome 8"/>
</dbReference>
<dbReference type="RNAct" id="Q8VC33">
    <property type="molecule type" value="protein"/>
</dbReference>
<dbReference type="Bgee" id="ENSMUSG00000034829">
    <property type="expression patterns" value="Expressed in retinal neural layer and 31 other cell types or tissues"/>
</dbReference>
<dbReference type="GO" id="GO:0005739">
    <property type="term" value="C:mitochondrion"/>
    <property type="evidence" value="ECO:0007005"/>
    <property type="project" value="MGI"/>
</dbReference>
<dbReference type="GO" id="GO:0001750">
    <property type="term" value="C:photoreceptor outer segment"/>
    <property type="evidence" value="ECO:0007669"/>
    <property type="project" value="UniProtKB-SubCell"/>
</dbReference>
<dbReference type="GO" id="GO:0048018">
    <property type="term" value="F:receptor ligand activity"/>
    <property type="evidence" value="ECO:0007669"/>
    <property type="project" value="Ensembl"/>
</dbReference>
<dbReference type="GO" id="GO:0045494">
    <property type="term" value="P:photoreceptor cell maintenance"/>
    <property type="evidence" value="ECO:0000315"/>
    <property type="project" value="UniProtKB"/>
</dbReference>
<dbReference type="CDD" id="cd03008">
    <property type="entry name" value="TryX_like_RdCVF"/>
    <property type="match status" value="1"/>
</dbReference>
<dbReference type="Gene3D" id="3.40.30.10">
    <property type="entry name" value="Glutaredoxin"/>
    <property type="match status" value="1"/>
</dbReference>
<dbReference type="InterPro" id="IPR029520">
    <property type="entry name" value="RdCVF"/>
</dbReference>
<dbReference type="InterPro" id="IPR012336">
    <property type="entry name" value="Thioredoxin-like_fold"/>
</dbReference>
<dbReference type="InterPro" id="IPR036249">
    <property type="entry name" value="Thioredoxin-like_sf"/>
</dbReference>
<dbReference type="PANTHER" id="PTHR47109">
    <property type="entry name" value="NUCLEOREDOXIN-LIKE PROTEIN 1"/>
    <property type="match status" value="1"/>
</dbReference>
<dbReference type="PANTHER" id="PTHR47109:SF1">
    <property type="entry name" value="NUCLEOREDOXIN-LIKE PROTEIN 1"/>
    <property type="match status" value="1"/>
</dbReference>
<dbReference type="Pfam" id="PF13905">
    <property type="entry name" value="Thioredoxin_8"/>
    <property type="match status" value="1"/>
</dbReference>
<dbReference type="SUPFAM" id="SSF52833">
    <property type="entry name" value="Thioredoxin-like"/>
    <property type="match status" value="1"/>
</dbReference>
<gene>
    <name type="primary">Nxnl1</name>
    <name type="synonym">Rdcvf</name>
    <name type="synonym">Txnl6</name>
</gene>
<keyword id="KW-0966">Cell projection</keyword>
<keyword id="KW-1185">Reference proteome</keyword>
<organism>
    <name type="scientific">Mus musculus</name>
    <name type="common">Mouse</name>
    <dbReference type="NCBI Taxonomy" id="10090"/>
    <lineage>
        <taxon>Eukaryota</taxon>
        <taxon>Metazoa</taxon>
        <taxon>Chordata</taxon>
        <taxon>Craniata</taxon>
        <taxon>Vertebrata</taxon>
        <taxon>Euteleostomi</taxon>
        <taxon>Mammalia</taxon>
        <taxon>Eutheria</taxon>
        <taxon>Euarchontoglires</taxon>
        <taxon>Glires</taxon>
        <taxon>Rodentia</taxon>
        <taxon>Myomorpha</taxon>
        <taxon>Muroidea</taxon>
        <taxon>Muridae</taxon>
        <taxon>Murinae</taxon>
        <taxon>Mus</taxon>
        <taxon>Mus</taxon>
    </lineage>
</organism>
<name>NXNL1_MOUSE</name>
<sequence>MASLFSGRILIRNNSDQDEVETEAELSRRLENRLVLLFFGAGACPQCQAFAPVLKDFFVRLTDEFYVLRAAQLALVYVSQDPTEEQQDLFLRDMPEKWLFLPFHDELRRDLGRQFSVRQLPAVVVLKPGGDVLTSDATEEIQRLGPACFANWQEAAELLDRSFLQPEDLDEPARRSITEPLRRRKYRVDRDVGRERGRNGRDSGDPQGDAGTRAELW</sequence>
<proteinExistence type="evidence at protein level"/>
<feature type="chain" id="PRO_0000319544" description="Nucleoredoxin-like protein 1">
    <location>
        <begin position="1"/>
        <end position="217"/>
    </location>
</feature>
<feature type="domain" description="Thioredoxin">
    <location>
        <begin position="1"/>
        <end position="164"/>
    </location>
</feature>
<feature type="region of interest" description="Disordered" evidence="1">
    <location>
        <begin position="188"/>
        <end position="217"/>
    </location>
</feature>
<feature type="compositionally biased region" description="Basic and acidic residues" evidence="1">
    <location>
        <begin position="188"/>
        <end position="204"/>
    </location>
</feature>
<reference key="1">
    <citation type="journal article" date="2004" name="Genome Res.">
        <title>The status, quality, and expansion of the NIH full-length cDNA project: the Mammalian Gene Collection (MGC).</title>
        <authorList>
            <consortium name="The MGC Project Team"/>
        </authorList>
    </citation>
    <scope>NUCLEOTIDE SEQUENCE [LARGE SCALE MRNA]</scope>
    <source>
        <strain>C57BL/6J</strain>
        <tissue>Retina</tissue>
    </source>
</reference>
<reference key="2">
    <citation type="journal article" date="2004" name="Nat. Genet.">
        <title>Identification and characterization of rod-derived cone viability factor.</title>
        <authorList>
            <person name="Leveillard T."/>
            <person name="Mohand-Said S."/>
            <person name="Lorentz O."/>
            <person name="Hicks D."/>
            <person name="Fintz A.-C."/>
            <person name="Clerin E."/>
            <person name="Simonutti M."/>
            <person name="Forster V."/>
            <person name="Cavusoglu N."/>
            <person name="Chalmel F."/>
            <person name="Dolle P."/>
            <person name="Poch O."/>
            <person name="Lambrou G."/>
            <person name="Sahel J.-A."/>
        </authorList>
    </citation>
    <scope>FUNCTION</scope>
    <scope>SUBCELLULAR LOCATION</scope>
    <scope>TISSUE SPECIFICITY</scope>
</reference>
<reference key="3">
    <citation type="journal article" date="2010" name="Hum. Mol. Genet.">
        <title>The homeobox gene CHX10/VSX2 regulates RdCVF promoter activity in the inner retina.</title>
        <authorList>
            <person name="Reichman S."/>
            <person name="Kalathur R.K."/>
            <person name="Lambard S."/>
            <person name="Ait-Ali N."/>
            <person name="Yang Y."/>
            <person name="Lardenois A."/>
            <person name="Ripp R."/>
            <person name="Poch O."/>
            <person name="Zack D.J."/>
            <person name="Sahel J.A."/>
            <person name="Leveillard T."/>
        </authorList>
    </citation>
    <scope>TISSUE SPECIFICITY</scope>
</reference>
<reference key="4">
    <citation type="journal article" date="2015" name="Cell">
        <title>Rod-derived cone viability factor promotes cone survival by stimulating aerobic glycolysis.</title>
        <authorList>
            <person name="Ait-Ali N."/>
            <person name="Fridlich R."/>
            <person name="Millet-Puel G."/>
            <person name="Clerin E."/>
            <person name="Delalande F."/>
            <person name="Jaillard C."/>
            <person name="Blond F."/>
            <person name="Perrocheau L."/>
            <person name="Reichman S."/>
            <person name="Byrne L.C."/>
            <person name="Olivier-Bandini A."/>
            <person name="Bellalou J."/>
            <person name="Moyse E."/>
            <person name="Bouillaud F."/>
            <person name="Nicol X."/>
            <person name="Dalkara D."/>
            <person name="van Dorsselaer A."/>
            <person name="Sahel J.A."/>
            <person name="Leveillard T."/>
        </authorList>
    </citation>
    <scope>FUNCTION</scope>
    <scope>INTERACTION WITH BSG</scope>
</reference>